<comment type="function">
    <text evidence="3 4 5 6 7">Inhibits the transactivation activity of the Myod family of myogenic factors and represses myogenesis (PubMed:8797820). Acts by associating with Myod family members and retaining them in the cytoplasm by masking their nuclear localization signals (PubMed:8797820). Can also interfere with the DNA-binding activity of Myod family members (PubMed:8797820). Plays an important role in trophoblast and chondrogenic differentiation (PubMed:9799236). Regulates the transcriptional activity of TCF7L1/TCF3 by interacting directly with Tcf7l1/Tcf3 and preventing it from binding DNA (PubMed:11238923). Binds to the axin complex, resulting in an increase in the level of free beta-catenin (PubMed:12192039). Affects axin regulation of the WNT and JNK signaling pathways (PubMed:12192039). Regulates the activity of mechanosensitive Piezo channel (PubMed:37590348).</text>
</comment>
<comment type="subunit">
    <text evidence="1 4 5">Interacts (via C-terminus) with AXIN1 and LEF1 (PubMed:12192039). Interacts with CCNT2 (By similarity). Interacts (via C-terminus) with Piezo channel composed of PIEZO1 or PIEZO2; the interaction prolongs Piezo channel inactivation (PubMed:37590348).</text>
</comment>
<comment type="subcellular location">
    <subcellularLocation>
        <location>Nucleus</location>
    </subcellularLocation>
    <subcellularLocation>
        <location evidence="5">Cytoplasm</location>
    </subcellularLocation>
</comment>
<comment type="alternative products">
    <event type="alternative splicing"/>
    <isoform>
        <id>P70331-1</id>
        <name>I-mfB</name>
        <sequence type="displayed"/>
    </isoform>
    <isoform>
        <id>P70331-2</id>
        <name>I-mfA</name>
        <sequence type="described" ref="VSP_004056"/>
    </isoform>
    <isoform>
        <id>P70331-3</id>
        <name>I-mfC</name>
        <sequence type="described" ref="VSP_004055 VSP_004057"/>
    </isoform>
</comment>
<comment type="tissue specificity">
    <text evidence="6">In the embryo, highly expressed in the sclerotome. Also expressed in the notochord, neural tube, limb buds, heart, branchial arches and head mesenchyme. In the adult, highly expressed in skeletal muscle. Expressed at lower levels in most other tissues.</text>
</comment>
<comment type="similarity">
    <text evidence="10">Belongs to the MDFI family.</text>
</comment>
<name>MDFI_MOUSE</name>
<sequence length="251" mass="26013">MSQVSGQCPSRCDAPHGVPSAALDPAQTMSLLPGLEVARSTHPVEASSEEGFPEEAAPSMPHDSGLRAQQALNSIDLDVPTEAVTCQPQGNPQGCTPLLPNGSSHDHLSEPGSAGHAGNGALGGSKAHRKLQTHPSLGSQAGRKSRGSARSASQVPLQAQEGKAPAVRIHRQTASPTCCLRNAQLSGTALRSLRLESQGHRELNNKTLSQSNNKKPGVAAHAAIIPALTRPKQNCHDPSLLPGTHGVGKEF</sequence>
<gene>
    <name type="primary">Mdfi</name>
</gene>
<organism>
    <name type="scientific">Mus musculus</name>
    <name type="common">Mouse</name>
    <dbReference type="NCBI Taxonomy" id="10090"/>
    <lineage>
        <taxon>Eukaryota</taxon>
        <taxon>Metazoa</taxon>
        <taxon>Chordata</taxon>
        <taxon>Craniata</taxon>
        <taxon>Vertebrata</taxon>
        <taxon>Euteleostomi</taxon>
        <taxon>Mammalia</taxon>
        <taxon>Eutheria</taxon>
        <taxon>Euarchontoglires</taxon>
        <taxon>Glires</taxon>
        <taxon>Rodentia</taxon>
        <taxon>Myomorpha</taxon>
        <taxon>Muroidea</taxon>
        <taxon>Muridae</taxon>
        <taxon>Murinae</taxon>
        <taxon>Mus</taxon>
        <taxon>Mus</taxon>
    </lineage>
</organism>
<reference key="1">
    <citation type="journal article" date="1996" name="Cell">
        <title>I-mf, a novel myogenic repressor, interacts with members of the MyoD family.</title>
        <authorList>
            <person name="Chen C.-M.A."/>
            <person name="Kraut N."/>
            <person name="Groudine M."/>
            <person name="Weintraub H."/>
        </authorList>
    </citation>
    <scope>NUCLEOTIDE SEQUENCE [MRNA] (ISOFORMS I-MFA; I-MFB AND I-MFC)</scope>
    <scope>FUNCTION</scope>
    <scope>SUBCELLULAR LOCATION</scope>
    <scope>TISSUE SPECIFICITY</scope>
    <source>
        <strain>NIH Swiss</strain>
        <tissue>Embryo</tissue>
    </source>
</reference>
<reference key="2">
    <citation type="journal article" date="2004" name="Genome Res.">
        <title>The status, quality, and expansion of the NIH full-length cDNA project: the Mammalian Gene Collection (MGC).</title>
        <authorList>
            <consortium name="The MGC Project Team"/>
        </authorList>
    </citation>
    <scope>NUCLEOTIDE SEQUENCE [LARGE SCALE MRNA] (ISOFORM I-MFA)</scope>
    <source>
        <strain>129</strain>
        <strain>FVB/N</strain>
        <tissue>Mammary gland</tissue>
    </source>
</reference>
<reference key="3">
    <citation type="journal article" date="1998" name="EMBO J.">
        <title>Requirement of the mouse I-mfa gene for placental development and skeletal patterning.</title>
        <authorList>
            <person name="Kraut N."/>
            <person name="Snider L."/>
            <person name="Chen C.-M.A."/>
            <person name="Tapscott S.J."/>
            <person name="Groudine M."/>
        </authorList>
    </citation>
    <scope>FUNCTION</scope>
</reference>
<reference key="4">
    <citation type="journal article" date="2001" name="Mol. Cell. Biol.">
        <title>Inhibition of Tcf3 binding by I-mfa domain proteins.</title>
        <authorList>
            <person name="Snider L."/>
            <person name="Thirlwell H."/>
            <person name="Miller J.R."/>
            <person name="Moon R.T."/>
            <person name="Groudine M."/>
            <person name="Tapscott S.J."/>
        </authorList>
    </citation>
    <scope>FUNCTION</scope>
    <scope>SUBCELLULAR LOCATION</scope>
</reference>
<reference key="5">
    <citation type="journal article" date="2002" name="Mol. Cell. Biol.">
        <title>I-mfa domain proteins interact with Axin and affect its regulation of the Wnt and c-Jun N-terminal kinase signaling pathways.</title>
        <authorList>
            <person name="Kusano S."/>
            <person name="Raab-Traub N."/>
        </authorList>
    </citation>
    <scope>FUNCTION</scope>
    <scope>INTERACTION WITH AXIN1 AND LEF1</scope>
</reference>
<reference key="6">
    <citation type="journal article" date="2023" name="Science">
        <title>MyoD-family inhibitor proteins act as auxiliary subunits of Piezo channels.</title>
        <authorList>
            <person name="Zhou Z."/>
            <person name="Ma X."/>
            <person name="Lin Y."/>
            <person name="Cheng D."/>
            <person name="Bavi N."/>
            <person name="Secker G.A."/>
            <person name="Li J.V."/>
            <person name="Janbandhu V."/>
            <person name="Sutton D.L."/>
            <person name="Scott H.S."/>
            <person name="Yao M."/>
            <person name="Harvey R.P."/>
            <person name="Harvey N.L."/>
            <person name="Corry B."/>
            <person name="Zhang Y."/>
            <person name="Cox C.D."/>
        </authorList>
    </citation>
    <scope>FUNCTION</scope>
    <scope>INTERACTION WITH PIEZO1 AND PIEZO2</scope>
    <scope>SUBCELLULAR LOCATION</scope>
</reference>
<evidence type="ECO:0000250" key="1">
    <source>
        <dbReference type="UniProtKB" id="Q99750"/>
    </source>
</evidence>
<evidence type="ECO:0000256" key="2">
    <source>
        <dbReference type="SAM" id="MobiDB-lite"/>
    </source>
</evidence>
<evidence type="ECO:0000269" key="3">
    <source>
    </source>
</evidence>
<evidence type="ECO:0000269" key="4">
    <source>
    </source>
</evidence>
<evidence type="ECO:0000269" key="5">
    <source>
    </source>
</evidence>
<evidence type="ECO:0000269" key="6">
    <source>
    </source>
</evidence>
<evidence type="ECO:0000269" key="7">
    <source>
    </source>
</evidence>
<evidence type="ECO:0000303" key="8">
    <source>
    </source>
</evidence>
<evidence type="ECO:0000303" key="9">
    <source>
    </source>
</evidence>
<evidence type="ECO:0000305" key="10"/>
<protein>
    <recommendedName>
        <fullName>MyoD family inhibitor</fullName>
    </recommendedName>
    <alternativeName>
        <fullName>Myogenic repressor I-mf</fullName>
    </alternativeName>
</protein>
<accession>P70331</accession>
<accession>P70330</accession>
<accession>P70332</accession>
<accession>Q5XK64</accession>
<accession>Q99JM9</accession>
<keyword id="KW-0025">Alternative splicing</keyword>
<keyword id="KW-0963">Cytoplasm</keyword>
<keyword id="KW-0217">Developmental protein</keyword>
<keyword id="KW-0221">Differentiation</keyword>
<keyword id="KW-0539">Nucleus</keyword>
<keyword id="KW-1185">Reference proteome</keyword>
<proteinExistence type="evidence at protein level"/>
<dbReference type="EMBL" id="U57820">
    <property type="protein sequence ID" value="AAC52791.1"/>
    <property type="molecule type" value="mRNA"/>
</dbReference>
<dbReference type="EMBL" id="U57821">
    <property type="protein sequence ID" value="AAC52792.1"/>
    <property type="molecule type" value="mRNA"/>
</dbReference>
<dbReference type="EMBL" id="U57822">
    <property type="protein sequence ID" value="AAC52793.1"/>
    <property type="molecule type" value="mRNA"/>
</dbReference>
<dbReference type="EMBL" id="BC006018">
    <property type="protein sequence ID" value="AAH06018.1"/>
    <property type="molecule type" value="mRNA"/>
</dbReference>
<dbReference type="EMBL" id="BC010259">
    <property type="protein sequence ID" value="AAH10259.1"/>
    <property type="molecule type" value="mRNA"/>
</dbReference>
<dbReference type="EMBL" id="BC083058">
    <property type="protein sequence ID" value="AAH83058.1"/>
    <property type="molecule type" value="mRNA"/>
</dbReference>
<dbReference type="EMBL" id="BC085233">
    <property type="protein sequence ID" value="AAH85233.1"/>
    <property type="molecule type" value="mRNA"/>
</dbReference>
<dbReference type="CCDS" id="CCDS50134.1">
    <molecule id="P70331-2"/>
</dbReference>
<dbReference type="RefSeq" id="NP_001103443.1">
    <molecule id="P70331-2"/>
    <property type="nucleotide sequence ID" value="NM_001109973.3"/>
</dbReference>
<dbReference type="RefSeq" id="NP_001263319.1">
    <molecule id="P70331-2"/>
    <property type="nucleotide sequence ID" value="NM_001276390.2"/>
</dbReference>
<dbReference type="RefSeq" id="NP_001419091.1">
    <molecule id="P70331-1"/>
    <property type="nucleotide sequence ID" value="NM_001432162.1"/>
</dbReference>
<dbReference type="RefSeq" id="NP_001419092.1">
    <molecule id="P70331-1"/>
    <property type="nucleotide sequence ID" value="NM_001432163.1"/>
</dbReference>
<dbReference type="RefSeq" id="NP_001419093.1">
    <molecule id="P70331-1"/>
    <property type="nucleotide sequence ID" value="NM_001432164.1"/>
</dbReference>
<dbReference type="RefSeq" id="NP_001419094.1">
    <molecule id="P70331-1"/>
    <property type="nucleotide sequence ID" value="NM_001432165.1"/>
</dbReference>
<dbReference type="RefSeq" id="NP_001419095.1">
    <molecule id="P70331-2"/>
    <property type="nucleotide sequence ID" value="NM_001432166.1"/>
</dbReference>
<dbReference type="RefSeq" id="NP_001419096.1">
    <molecule id="P70331-2"/>
    <property type="nucleotide sequence ID" value="NM_001432167.1"/>
</dbReference>
<dbReference type="RefSeq" id="NP_034913.2">
    <molecule id="P70331-2"/>
    <property type="nucleotide sequence ID" value="NM_010783.4"/>
</dbReference>
<dbReference type="RefSeq" id="XP_006523806.1">
    <property type="nucleotide sequence ID" value="XM_006523743.3"/>
</dbReference>
<dbReference type="RefSeq" id="XP_006523807.1">
    <property type="nucleotide sequence ID" value="XM_006523744.3"/>
</dbReference>
<dbReference type="RefSeq" id="XP_006523808.1">
    <property type="nucleotide sequence ID" value="XM_006523745.3"/>
</dbReference>
<dbReference type="BioGRID" id="201368">
    <property type="interactions" value="2"/>
</dbReference>
<dbReference type="FunCoup" id="P70331">
    <property type="interactions" value="321"/>
</dbReference>
<dbReference type="STRING" id="10090.ENSMUSP00000069915"/>
<dbReference type="iPTMnet" id="P70331"/>
<dbReference type="PhosphoSitePlus" id="P70331"/>
<dbReference type="PaxDb" id="10090-ENSMUSP00000069915"/>
<dbReference type="Antibodypedia" id="30051">
    <property type="antibodies" value="165 antibodies from 30 providers"/>
</dbReference>
<dbReference type="DNASU" id="17240"/>
<dbReference type="Ensembl" id="ENSMUST00000035375.14">
    <molecule id="P70331-2"/>
    <property type="protein sequence ID" value="ENSMUSP00000037888.8"/>
    <property type="gene ID" value="ENSMUSG00000032717.15"/>
</dbReference>
<dbReference type="Ensembl" id="ENSMUST00000066368.13">
    <molecule id="P70331-2"/>
    <property type="protein sequence ID" value="ENSMUSP00000069915.7"/>
    <property type="gene ID" value="ENSMUSG00000032717.15"/>
</dbReference>
<dbReference type="GeneID" id="17240"/>
<dbReference type="KEGG" id="mmu:17240"/>
<dbReference type="UCSC" id="uc008cwh.3">
    <molecule id="P70331-2"/>
    <property type="organism name" value="mouse"/>
</dbReference>
<dbReference type="UCSC" id="uc008cwj.3">
    <molecule id="P70331-1"/>
    <property type="organism name" value="mouse"/>
</dbReference>
<dbReference type="AGR" id="MGI:107687"/>
<dbReference type="CTD" id="4188"/>
<dbReference type="MGI" id="MGI:107687">
    <property type="gene designation" value="Mdfi"/>
</dbReference>
<dbReference type="VEuPathDB" id="HostDB:ENSMUSG00000032717"/>
<dbReference type="eggNOG" id="ENOG502RZMC">
    <property type="taxonomic scope" value="Eukaryota"/>
</dbReference>
<dbReference type="GeneTree" id="ENSGT00940000160187"/>
<dbReference type="HOGENOM" id="CLU_067479_1_0_1"/>
<dbReference type="InParanoid" id="P70331"/>
<dbReference type="OMA" id="MPQGNDP"/>
<dbReference type="PhylomeDB" id="P70331"/>
<dbReference type="TreeFam" id="TF332113"/>
<dbReference type="BioGRID-ORCS" id="17240">
    <property type="hits" value="2 hits in 80 CRISPR screens"/>
</dbReference>
<dbReference type="ChiTaRS" id="Mdfi">
    <property type="organism name" value="mouse"/>
</dbReference>
<dbReference type="PRO" id="PR:P70331"/>
<dbReference type="Proteomes" id="UP000000589">
    <property type="component" value="Chromosome 17"/>
</dbReference>
<dbReference type="RNAct" id="P70331">
    <property type="molecule type" value="protein"/>
</dbReference>
<dbReference type="Bgee" id="ENSMUSG00000032717">
    <property type="expression patterns" value="Expressed in ectoplacental cone and 146 other cell types or tissues"/>
</dbReference>
<dbReference type="ExpressionAtlas" id="P70331">
    <property type="expression patterns" value="baseline and differential"/>
</dbReference>
<dbReference type="GO" id="GO:0005737">
    <property type="term" value="C:cytoplasm"/>
    <property type="evidence" value="ECO:0007669"/>
    <property type="project" value="UniProtKB-SubCell"/>
</dbReference>
<dbReference type="GO" id="GO:0005634">
    <property type="term" value="C:nucleus"/>
    <property type="evidence" value="ECO:0000314"/>
    <property type="project" value="UniProtKB"/>
</dbReference>
<dbReference type="GO" id="GO:0140297">
    <property type="term" value="F:DNA-binding transcription factor binding"/>
    <property type="evidence" value="ECO:0000353"/>
    <property type="project" value="UniProtKB"/>
</dbReference>
<dbReference type="GO" id="GO:0042802">
    <property type="term" value="F:identical protein binding"/>
    <property type="evidence" value="ECO:0007669"/>
    <property type="project" value="Ensembl"/>
</dbReference>
<dbReference type="GO" id="GO:0140311">
    <property type="term" value="F:protein sequestering activity"/>
    <property type="evidence" value="ECO:0007669"/>
    <property type="project" value="Ensembl"/>
</dbReference>
<dbReference type="GO" id="GO:0009950">
    <property type="term" value="P:dorsal/ventral axis specification"/>
    <property type="evidence" value="ECO:0000315"/>
    <property type="project" value="UniProtKB"/>
</dbReference>
<dbReference type="GO" id="GO:0048704">
    <property type="term" value="P:embryonic skeletal system morphogenesis"/>
    <property type="evidence" value="ECO:0000315"/>
    <property type="project" value="MGI"/>
</dbReference>
<dbReference type="GO" id="GO:0032507">
    <property type="term" value="P:maintenance of protein location in cell"/>
    <property type="evidence" value="ECO:0007669"/>
    <property type="project" value="Ensembl"/>
</dbReference>
<dbReference type="GO" id="GO:0043392">
    <property type="term" value="P:negative regulation of DNA binding"/>
    <property type="evidence" value="ECO:0000314"/>
    <property type="project" value="UniProtKB"/>
</dbReference>
<dbReference type="GO" id="GO:0000122">
    <property type="term" value="P:negative regulation of transcription by RNA polymerase II"/>
    <property type="evidence" value="ECO:0000315"/>
    <property type="project" value="UniProtKB"/>
</dbReference>
<dbReference type="GO" id="GO:0030178">
    <property type="term" value="P:negative regulation of Wnt signaling pathway"/>
    <property type="evidence" value="ECO:0000316"/>
    <property type="project" value="UniProtKB"/>
</dbReference>
<dbReference type="GO" id="GO:0010468">
    <property type="term" value="P:regulation of gene expression"/>
    <property type="evidence" value="ECO:0007669"/>
    <property type="project" value="UniProtKB-ARBA"/>
</dbReference>
<dbReference type="GO" id="GO:0046328">
    <property type="term" value="P:regulation of JNK cascade"/>
    <property type="evidence" value="ECO:0000314"/>
    <property type="project" value="UniProtKB"/>
</dbReference>
<dbReference type="GO" id="GO:0030111">
    <property type="term" value="P:regulation of Wnt signaling pathway"/>
    <property type="evidence" value="ECO:0000314"/>
    <property type="project" value="UniProtKB"/>
</dbReference>
<dbReference type="GO" id="GO:0060707">
    <property type="term" value="P:trophoblast giant cell differentiation"/>
    <property type="evidence" value="ECO:0000315"/>
    <property type="project" value="MGI"/>
</dbReference>
<dbReference type="InterPro" id="IPR026134">
    <property type="entry name" value="MDFI/MDFIC"/>
</dbReference>
<dbReference type="PANTHER" id="PTHR15304">
    <property type="entry name" value="MYOD FAMILY INHIBITOR"/>
    <property type="match status" value="1"/>
</dbReference>
<dbReference type="PANTHER" id="PTHR15304:SF1">
    <property type="entry name" value="MYOD FAMILY INHIBITOR"/>
    <property type="match status" value="1"/>
</dbReference>
<feature type="chain" id="PRO_0000096325" description="MyoD family inhibitor">
    <location>
        <begin position="1"/>
        <end position="251"/>
    </location>
</feature>
<feature type="region of interest" description="Disordered" evidence="2">
    <location>
        <begin position="1"/>
        <end position="64"/>
    </location>
</feature>
<feature type="region of interest" description="Disordered" evidence="2">
    <location>
        <begin position="84"/>
        <end position="167"/>
    </location>
</feature>
<feature type="region of interest" description="Disordered" evidence="2">
    <location>
        <begin position="230"/>
        <end position="251"/>
    </location>
</feature>
<feature type="compositionally biased region" description="Polar residues" evidence="2">
    <location>
        <begin position="84"/>
        <end position="94"/>
    </location>
</feature>
<feature type="compositionally biased region" description="Low complexity" evidence="2">
    <location>
        <begin position="138"/>
        <end position="154"/>
    </location>
</feature>
<feature type="splice variant" id="VSP_004055" description="In isoform I-mfC." evidence="9">
    <original>SLGSQAGRKSRGSARSASQVPLQAQEGK</original>
    <variation>PQPPNRSAFRRVAWSPPRVTRNTASRAW</variation>
    <location>
        <begin position="136"/>
        <end position="163"/>
    </location>
</feature>
<feature type="splice variant" id="VSP_004056" description="In isoform I-mfA." evidence="8 9">
    <original>GKAPAVRIHRQTASPTCCLRNAQLSGTALRSLRLESQGHRELNNKTLSQSNNKKPGVAAHAAIIPALTRPKQNCHDPSLLPGTHGVGKEF</original>
    <variation>DCCVHCILSCLFCEFLTLCNILLDCATCGSCSSEDSCLCCCCCGSGECADCDLPCDLDCGIVDACCESADCLEICMECCGLCFSS</variation>
    <location>
        <begin position="162"/>
        <end position="251"/>
    </location>
</feature>
<feature type="splice variant" id="VSP_004057" description="In isoform I-mfC." evidence="9">
    <location>
        <begin position="164"/>
        <end position="251"/>
    </location>
</feature>